<keyword id="KW-0963">Cytoplasm</keyword>
<keyword id="KW-0238">DNA-binding</keyword>
<keyword id="KW-0677">Repeat</keyword>
<keyword id="KW-0804">Transcription</keyword>
<keyword id="KW-0805">Transcription regulation</keyword>
<comment type="subunit">
    <text evidence="1">Forms oligomers.</text>
</comment>
<comment type="subcellular location">
    <subcellularLocation>
        <location evidence="1">Cytoplasm</location>
        <location evidence="1">Nucleoid</location>
    </subcellularLocation>
</comment>
<comment type="similarity">
    <text evidence="1">Belongs to the MraZ family.</text>
</comment>
<name>MRAZ_CLOBB</name>
<accession>B2TS31</accession>
<feature type="chain" id="PRO_1000134782" description="Transcriptional regulator MraZ">
    <location>
        <begin position="1"/>
        <end position="142"/>
    </location>
</feature>
<feature type="domain" description="SpoVT-AbrB 1" evidence="2">
    <location>
        <begin position="5"/>
        <end position="47"/>
    </location>
</feature>
<feature type="domain" description="SpoVT-AbrB 2" evidence="2">
    <location>
        <begin position="76"/>
        <end position="119"/>
    </location>
</feature>
<sequence length="142" mass="16412">MFIGEYQHSLDSKNRMIVPAKLREDLGEMFVITKGLDGCIYAYTINEWRILENKLKTLPLTNKDARAFVRFFFSGACIVDLDKQGRGLIPQNLKEYAGIEKDIVSIGVLSRVEIWSREKWINYNESDIDYDLIAEKMNDLGI</sequence>
<reference key="1">
    <citation type="submission" date="2008-04" db="EMBL/GenBank/DDBJ databases">
        <title>Complete sequence of Clostridium botulinum strain Eklund.</title>
        <authorList>
            <person name="Brinkac L.M."/>
            <person name="Brown J.L."/>
            <person name="Bruce D."/>
            <person name="Detter C."/>
            <person name="Munk C."/>
            <person name="Smith L.A."/>
            <person name="Smith T.J."/>
            <person name="Sutton G."/>
            <person name="Brettin T.S."/>
        </authorList>
    </citation>
    <scope>NUCLEOTIDE SEQUENCE [LARGE SCALE GENOMIC DNA]</scope>
    <source>
        <strain>Eklund 17B / Type B</strain>
    </source>
</reference>
<dbReference type="EMBL" id="CP001056">
    <property type="protein sequence ID" value="ACD24189.1"/>
    <property type="molecule type" value="Genomic_DNA"/>
</dbReference>
<dbReference type="SMR" id="B2TS31"/>
<dbReference type="KEGG" id="cbk:CLL_A2449"/>
<dbReference type="PATRIC" id="fig|935198.13.peg.2409"/>
<dbReference type="HOGENOM" id="CLU_107907_0_5_9"/>
<dbReference type="Proteomes" id="UP000001195">
    <property type="component" value="Chromosome"/>
</dbReference>
<dbReference type="GO" id="GO:0005737">
    <property type="term" value="C:cytoplasm"/>
    <property type="evidence" value="ECO:0007669"/>
    <property type="project" value="UniProtKB-UniRule"/>
</dbReference>
<dbReference type="GO" id="GO:0009295">
    <property type="term" value="C:nucleoid"/>
    <property type="evidence" value="ECO:0007669"/>
    <property type="project" value="UniProtKB-SubCell"/>
</dbReference>
<dbReference type="GO" id="GO:0003700">
    <property type="term" value="F:DNA-binding transcription factor activity"/>
    <property type="evidence" value="ECO:0007669"/>
    <property type="project" value="UniProtKB-UniRule"/>
</dbReference>
<dbReference type="GO" id="GO:0000976">
    <property type="term" value="F:transcription cis-regulatory region binding"/>
    <property type="evidence" value="ECO:0007669"/>
    <property type="project" value="TreeGrafter"/>
</dbReference>
<dbReference type="GO" id="GO:2000143">
    <property type="term" value="P:negative regulation of DNA-templated transcription initiation"/>
    <property type="evidence" value="ECO:0007669"/>
    <property type="project" value="TreeGrafter"/>
</dbReference>
<dbReference type="CDD" id="cd16321">
    <property type="entry name" value="MraZ_C"/>
    <property type="match status" value="1"/>
</dbReference>
<dbReference type="CDD" id="cd16320">
    <property type="entry name" value="MraZ_N"/>
    <property type="match status" value="1"/>
</dbReference>
<dbReference type="FunFam" id="3.40.1550.20:FF:000002">
    <property type="entry name" value="Transcriptional regulator MraZ"/>
    <property type="match status" value="1"/>
</dbReference>
<dbReference type="Gene3D" id="3.40.1550.20">
    <property type="entry name" value="Transcriptional regulator MraZ domain"/>
    <property type="match status" value="1"/>
</dbReference>
<dbReference type="HAMAP" id="MF_01008">
    <property type="entry name" value="MraZ"/>
    <property type="match status" value="1"/>
</dbReference>
<dbReference type="InterPro" id="IPR003444">
    <property type="entry name" value="MraZ"/>
</dbReference>
<dbReference type="InterPro" id="IPR035644">
    <property type="entry name" value="MraZ_C"/>
</dbReference>
<dbReference type="InterPro" id="IPR020603">
    <property type="entry name" value="MraZ_dom"/>
</dbReference>
<dbReference type="InterPro" id="IPR035642">
    <property type="entry name" value="MraZ_N"/>
</dbReference>
<dbReference type="InterPro" id="IPR038619">
    <property type="entry name" value="MraZ_sf"/>
</dbReference>
<dbReference type="InterPro" id="IPR007159">
    <property type="entry name" value="SpoVT-AbrB_dom"/>
</dbReference>
<dbReference type="InterPro" id="IPR037914">
    <property type="entry name" value="SpoVT-AbrB_sf"/>
</dbReference>
<dbReference type="NCBIfam" id="TIGR00242">
    <property type="entry name" value="division/cell wall cluster transcriptional repressor MraZ"/>
    <property type="match status" value="1"/>
</dbReference>
<dbReference type="PANTHER" id="PTHR34701">
    <property type="entry name" value="TRANSCRIPTIONAL REGULATOR MRAZ"/>
    <property type="match status" value="1"/>
</dbReference>
<dbReference type="PANTHER" id="PTHR34701:SF1">
    <property type="entry name" value="TRANSCRIPTIONAL REGULATOR MRAZ"/>
    <property type="match status" value="1"/>
</dbReference>
<dbReference type="Pfam" id="PF02381">
    <property type="entry name" value="MraZ"/>
    <property type="match status" value="2"/>
</dbReference>
<dbReference type="SUPFAM" id="SSF89447">
    <property type="entry name" value="AbrB/MazE/MraZ-like"/>
    <property type="match status" value="1"/>
</dbReference>
<dbReference type="PROSITE" id="PS51740">
    <property type="entry name" value="SPOVT_ABRB"/>
    <property type="match status" value="2"/>
</dbReference>
<proteinExistence type="inferred from homology"/>
<protein>
    <recommendedName>
        <fullName>Transcriptional regulator MraZ</fullName>
    </recommendedName>
</protein>
<organism>
    <name type="scientific">Clostridium botulinum (strain Eklund 17B / Type B)</name>
    <dbReference type="NCBI Taxonomy" id="935198"/>
    <lineage>
        <taxon>Bacteria</taxon>
        <taxon>Bacillati</taxon>
        <taxon>Bacillota</taxon>
        <taxon>Clostridia</taxon>
        <taxon>Eubacteriales</taxon>
        <taxon>Clostridiaceae</taxon>
        <taxon>Clostridium</taxon>
    </lineage>
</organism>
<evidence type="ECO:0000255" key="1">
    <source>
        <dbReference type="HAMAP-Rule" id="MF_01008"/>
    </source>
</evidence>
<evidence type="ECO:0000255" key="2">
    <source>
        <dbReference type="PROSITE-ProRule" id="PRU01076"/>
    </source>
</evidence>
<gene>
    <name evidence="1" type="primary">mraZ</name>
    <name type="ordered locus">CLL_A2449</name>
</gene>